<gene>
    <name evidence="1" type="primary">acpS</name>
    <name type="ordered locus">MRA_2550</name>
</gene>
<organism>
    <name type="scientific">Mycobacterium tuberculosis (strain ATCC 25177 / H37Ra)</name>
    <dbReference type="NCBI Taxonomy" id="419947"/>
    <lineage>
        <taxon>Bacteria</taxon>
        <taxon>Bacillati</taxon>
        <taxon>Actinomycetota</taxon>
        <taxon>Actinomycetes</taxon>
        <taxon>Mycobacteriales</taxon>
        <taxon>Mycobacteriaceae</taxon>
        <taxon>Mycobacterium</taxon>
        <taxon>Mycobacterium tuberculosis complex</taxon>
    </lineage>
</organism>
<accession>A5U5M1</accession>
<keyword id="KW-0963">Cytoplasm</keyword>
<keyword id="KW-0275">Fatty acid biosynthesis</keyword>
<keyword id="KW-0276">Fatty acid metabolism</keyword>
<keyword id="KW-0444">Lipid biosynthesis</keyword>
<keyword id="KW-0443">Lipid metabolism</keyword>
<keyword id="KW-0460">Magnesium</keyword>
<keyword id="KW-0479">Metal-binding</keyword>
<keyword id="KW-1185">Reference proteome</keyword>
<keyword id="KW-0808">Transferase</keyword>
<sequence>MGIVGVGIDLVSIPDFAEQVDQPGTVFAETFTPGERRDASDKSSSAARHLAARWAAKEAVIKAWSGSRFAQRPVLPEDIHRDIEVVTDMWGRPRVRLTGAIAEYLADVTIHVSLTHEGDTAAAVAILEAP</sequence>
<evidence type="ECO:0000255" key="1">
    <source>
        <dbReference type="HAMAP-Rule" id="MF_00101"/>
    </source>
</evidence>
<proteinExistence type="inferred from homology"/>
<dbReference type="EC" id="2.7.8.7" evidence="1"/>
<dbReference type="EMBL" id="CP000611">
    <property type="protein sequence ID" value="ABQ74321.1"/>
    <property type="molecule type" value="Genomic_DNA"/>
</dbReference>
<dbReference type="RefSeq" id="WP_003412952.1">
    <property type="nucleotide sequence ID" value="NZ_CP016972.1"/>
</dbReference>
<dbReference type="SMR" id="A5U5M1"/>
<dbReference type="KEGG" id="mra:MRA_2550"/>
<dbReference type="eggNOG" id="COG0736">
    <property type="taxonomic scope" value="Bacteria"/>
</dbReference>
<dbReference type="HOGENOM" id="CLU_089696_2_0_11"/>
<dbReference type="Proteomes" id="UP000001988">
    <property type="component" value="Chromosome"/>
</dbReference>
<dbReference type="GO" id="GO:0005737">
    <property type="term" value="C:cytoplasm"/>
    <property type="evidence" value="ECO:0007669"/>
    <property type="project" value="UniProtKB-SubCell"/>
</dbReference>
<dbReference type="GO" id="GO:0008897">
    <property type="term" value="F:holo-[acyl-carrier-protein] synthase activity"/>
    <property type="evidence" value="ECO:0007669"/>
    <property type="project" value="UniProtKB-UniRule"/>
</dbReference>
<dbReference type="GO" id="GO:0000287">
    <property type="term" value="F:magnesium ion binding"/>
    <property type="evidence" value="ECO:0007669"/>
    <property type="project" value="UniProtKB-UniRule"/>
</dbReference>
<dbReference type="GO" id="GO:0006633">
    <property type="term" value="P:fatty acid biosynthetic process"/>
    <property type="evidence" value="ECO:0007669"/>
    <property type="project" value="UniProtKB-UniRule"/>
</dbReference>
<dbReference type="Gene3D" id="3.90.470.20">
    <property type="entry name" value="4'-phosphopantetheinyl transferase domain"/>
    <property type="match status" value="1"/>
</dbReference>
<dbReference type="HAMAP" id="MF_00101">
    <property type="entry name" value="AcpS"/>
    <property type="match status" value="1"/>
</dbReference>
<dbReference type="InterPro" id="IPR008278">
    <property type="entry name" value="4-PPantetheinyl_Trfase_dom"/>
</dbReference>
<dbReference type="InterPro" id="IPR037143">
    <property type="entry name" value="4-PPantetheinyl_Trfase_dom_sf"/>
</dbReference>
<dbReference type="InterPro" id="IPR002582">
    <property type="entry name" value="ACPS"/>
</dbReference>
<dbReference type="InterPro" id="IPR004568">
    <property type="entry name" value="Ppantetheine-prot_Trfase_dom"/>
</dbReference>
<dbReference type="NCBIfam" id="TIGR00556">
    <property type="entry name" value="pantethn_trn"/>
    <property type="match status" value="1"/>
</dbReference>
<dbReference type="NCBIfam" id="NF000831">
    <property type="entry name" value="PRK00070.3-1"/>
    <property type="match status" value="1"/>
</dbReference>
<dbReference type="Pfam" id="PF01648">
    <property type="entry name" value="ACPS"/>
    <property type="match status" value="1"/>
</dbReference>
<dbReference type="SUPFAM" id="SSF56214">
    <property type="entry name" value="4'-phosphopantetheinyl transferase"/>
    <property type="match status" value="1"/>
</dbReference>
<name>ACPS_MYCTA</name>
<comment type="function">
    <text evidence="1">Transfers the 4'-phosphopantetheine moiety from coenzyme A to a Ser of acyl-carrier-protein.</text>
</comment>
<comment type="catalytic activity">
    <reaction evidence="1">
        <text>apo-[ACP] + CoA = holo-[ACP] + adenosine 3',5'-bisphosphate + H(+)</text>
        <dbReference type="Rhea" id="RHEA:12068"/>
        <dbReference type="Rhea" id="RHEA-COMP:9685"/>
        <dbReference type="Rhea" id="RHEA-COMP:9690"/>
        <dbReference type="ChEBI" id="CHEBI:15378"/>
        <dbReference type="ChEBI" id="CHEBI:29999"/>
        <dbReference type="ChEBI" id="CHEBI:57287"/>
        <dbReference type="ChEBI" id="CHEBI:58343"/>
        <dbReference type="ChEBI" id="CHEBI:64479"/>
        <dbReference type="EC" id="2.7.8.7"/>
    </reaction>
</comment>
<comment type="cofactor">
    <cofactor evidence="1">
        <name>Mg(2+)</name>
        <dbReference type="ChEBI" id="CHEBI:18420"/>
    </cofactor>
</comment>
<comment type="subcellular location">
    <subcellularLocation>
        <location evidence="1">Cytoplasm</location>
    </subcellularLocation>
</comment>
<comment type="similarity">
    <text evidence="1">Belongs to the P-Pant transferase superfamily. AcpS family.</text>
</comment>
<feature type="chain" id="PRO_1000008458" description="Holo-[acyl-carrier-protein] synthase">
    <location>
        <begin position="1"/>
        <end position="130"/>
    </location>
</feature>
<feature type="binding site" evidence="1">
    <location>
        <position position="9"/>
    </location>
    <ligand>
        <name>Mg(2+)</name>
        <dbReference type="ChEBI" id="CHEBI:18420"/>
    </ligand>
</feature>
<feature type="binding site" evidence="1">
    <location>
        <position position="58"/>
    </location>
    <ligand>
        <name>Mg(2+)</name>
        <dbReference type="ChEBI" id="CHEBI:18420"/>
    </ligand>
</feature>
<reference key="1">
    <citation type="journal article" date="2008" name="PLoS ONE">
        <title>Genetic basis of virulence attenuation revealed by comparative genomic analysis of Mycobacterium tuberculosis strain H37Ra versus H37Rv.</title>
        <authorList>
            <person name="Zheng H."/>
            <person name="Lu L."/>
            <person name="Wang B."/>
            <person name="Pu S."/>
            <person name="Zhang X."/>
            <person name="Zhu G."/>
            <person name="Shi W."/>
            <person name="Zhang L."/>
            <person name="Wang H."/>
            <person name="Wang S."/>
            <person name="Zhao G."/>
            <person name="Zhang Y."/>
        </authorList>
    </citation>
    <scope>NUCLEOTIDE SEQUENCE [LARGE SCALE GENOMIC DNA]</scope>
    <source>
        <strain>ATCC 25177 / H37Ra</strain>
    </source>
</reference>
<protein>
    <recommendedName>
        <fullName evidence="1">Holo-[acyl-carrier-protein] synthase</fullName>
        <shortName evidence="1">Holo-ACP synthase</shortName>
        <ecNumber evidence="1">2.7.8.7</ecNumber>
    </recommendedName>
    <alternativeName>
        <fullName evidence="1">4'-phosphopantetheinyl transferase AcpS</fullName>
    </alternativeName>
</protein>